<comment type="function">
    <text evidence="5 7">May organize microtubules by mediating spindle positioning and movement in the budding process. Required for cytokinesis and the maintenance of polarized hyphal growth.</text>
</comment>
<comment type="subunit">
    <text evidence="8">Interacts with IQG1.</text>
</comment>
<comment type="subcellular location">
    <subcellularLocation>
        <location>Bud neck</location>
    </subcellularLocation>
    <subcellularLocation>
        <location>Cell septum</location>
    </subcellularLocation>
    <text>Localizes only at septal sites in both yeast and hyphal stages.</text>
</comment>
<comment type="disruption phenotype">
    <text evidence="5 6">Lead to a cell separation defect.</text>
</comment>
<comment type="similarity">
    <text evidence="9">Belongs to the formin homology family. BNI1 subfamily.</text>
</comment>
<feature type="chain" id="PRO_0000424602" description="Formin BNR1">
    <location>
        <begin position="1"/>
        <end position="1485"/>
    </location>
</feature>
<feature type="domain" description="GBD/FH3" evidence="2">
    <location>
        <begin position="110"/>
        <end position="636"/>
    </location>
</feature>
<feature type="domain" description="FH2" evidence="3">
    <location>
        <begin position="953"/>
        <end position="1368"/>
    </location>
</feature>
<feature type="region of interest" description="Disordered" evidence="4">
    <location>
        <begin position="65"/>
        <end position="88"/>
    </location>
</feature>
<feature type="region of interest" description="Disordered" evidence="4">
    <location>
        <begin position="226"/>
        <end position="248"/>
    </location>
</feature>
<feature type="region of interest" description="Disordered" evidence="4">
    <location>
        <begin position="549"/>
        <end position="575"/>
    </location>
</feature>
<feature type="region of interest" description="Disordered" evidence="4">
    <location>
        <begin position="746"/>
        <end position="874"/>
    </location>
</feature>
<feature type="region of interest" description="Disordered" evidence="4">
    <location>
        <begin position="1447"/>
        <end position="1471"/>
    </location>
</feature>
<feature type="coiled-coil region" evidence="1">
    <location>
        <begin position="660"/>
        <end position="734"/>
    </location>
</feature>
<feature type="coiled-coil region" evidence="1">
    <location>
        <begin position="1240"/>
        <end position="1312"/>
    </location>
</feature>
<feature type="coiled-coil region" evidence="1">
    <location>
        <begin position="1351"/>
        <end position="1382"/>
    </location>
</feature>
<feature type="compositionally biased region" description="Polar residues" evidence="4">
    <location>
        <begin position="231"/>
        <end position="248"/>
    </location>
</feature>
<feature type="compositionally biased region" description="Acidic residues" evidence="4">
    <location>
        <begin position="553"/>
        <end position="564"/>
    </location>
</feature>
<proteinExistence type="evidence at protein level"/>
<organism>
    <name type="scientific">Candida albicans (strain SC5314 / ATCC MYA-2876)</name>
    <name type="common">Yeast</name>
    <dbReference type="NCBI Taxonomy" id="237561"/>
    <lineage>
        <taxon>Eukaryota</taxon>
        <taxon>Fungi</taxon>
        <taxon>Dikarya</taxon>
        <taxon>Ascomycota</taxon>
        <taxon>Saccharomycotina</taxon>
        <taxon>Pichiomycetes</taxon>
        <taxon>Debaryomycetaceae</taxon>
        <taxon>Candida/Lodderomyces clade</taxon>
        <taxon>Candida</taxon>
    </lineage>
</organism>
<evidence type="ECO:0000255" key="1"/>
<evidence type="ECO:0000255" key="2">
    <source>
        <dbReference type="PROSITE-ProRule" id="PRU00579"/>
    </source>
</evidence>
<evidence type="ECO:0000255" key="3">
    <source>
        <dbReference type="PROSITE-ProRule" id="PRU00774"/>
    </source>
</evidence>
<evidence type="ECO:0000256" key="4">
    <source>
        <dbReference type="SAM" id="MobiDB-lite"/>
    </source>
</evidence>
<evidence type="ECO:0000269" key="5">
    <source>
    </source>
</evidence>
<evidence type="ECO:0000269" key="6">
    <source>
    </source>
</evidence>
<evidence type="ECO:0000269" key="7">
    <source>
    </source>
</evidence>
<evidence type="ECO:0000269" key="8">
    <source>
    </source>
</evidence>
<evidence type="ECO:0000305" key="9"/>
<gene>
    <name type="primary">BNR1</name>
    <name type="synonym">BNI1</name>
    <name type="ordered locus">CAALFM_CR00070WA</name>
    <name type="ORF">CaO19.7537</name>
</gene>
<name>BNR1_CANAL</name>
<protein>
    <recommendedName>
        <fullName>Formin BNR1</fullName>
    </recommendedName>
</protein>
<reference key="1">
    <citation type="journal article" date="2004" name="Proc. Natl. Acad. Sci. U.S.A.">
        <title>The diploid genome sequence of Candida albicans.</title>
        <authorList>
            <person name="Jones T."/>
            <person name="Federspiel N.A."/>
            <person name="Chibana H."/>
            <person name="Dungan J."/>
            <person name="Kalman S."/>
            <person name="Magee B.B."/>
            <person name="Newport G."/>
            <person name="Thorstenson Y.R."/>
            <person name="Agabian N."/>
            <person name="Magee P.T."/>
            <person name="Davis R.W."/>
            <person name="Scherer S."/>
        </authorList>
    </citation>
    <scope>NUCLEOTIDE SEQUENCE [LARGE SCALE GENOMIC DNA]</scope>
    <source>
        <strain>SC5314 / ATCC MYA-2876</strain>
    </source>
</reference>
<reference key="2">
    <citation type="journal article" date="2007" name="Genome Biol.">
        <title>Assembly of the Candida albicans genome into sixteen supercontigs aligned on the eight chromosomes.</title>
        <authorList>
            <person name="van het Hoog M."/>
            <person name="Rast T.J."/>
            <person name="Martchenko M."/>
            <person name="Grindle S."/>
            <person name="Dignard D."/>
            <person name="Hogues H."/>
            <person name="Cuomo C."/>
            <person name="Berriman M."/>
            <person name="Scherer S."/>
            <person name="Magee B.B."/>
            <person name="Whiteway M."/>
            <person name="Chibana H."/>
            <person name="Nantel A."/>
            <person name="Magee P.T."/>
        </authorList>
    </citation>
    <scope>GENOME REANNOTATION</scope>
    <source>
        <strain>SC5314 / ATCC MYA-2876</strain>
    </source>
</reference>
<reference key="3">
    <citation type="journal article" date="2013" name="Genome Biol.">
        <title>Assembly of a phased diploid Candida albicans genome facilitates allele-specific measurements and provides a simple model for repeat and indel structure.</title>
        <authorList>
            <person name="Muzzey D."/>
            <person name="Schwartz K."/>
            <person name="Weissman J.S."/>
            <person name="Sherlock G."/>
        </authorList>
    </citation>
    <scope>NUCLEOTIDE SEQUENCE [LARGE SCALE GENOMIC DNA]</scope>
    <scope>GENOME REANNOTATION</scope>
    <source>
        <strain>SC5314 / ATCC MYA-2876</strain>
    </source>
</reference>
<reference key="4">
    <citation type="journal article" date="2005" name="Eukaryot. Cell">
        <title>Ras1-induced hyphal development in Candida albicans requires the formin Bni1.</title>
        <authorList>
            <person name="Martin R."/>
            <person name="Walther A."/>
            <person name="Wendland J."/>
        </authorList>
    </citation>
    <scope>FUNCTION</scope>
    <scope>SUBCELLULAR LOCATION</scope>
    <scope>DISRUPTION PHENOTYPE</scope>
</reference>
<reference key="5">
    <citation type="journal article" date="2005" name="J. Cell Sci.">
        <title>The formin family protein CaBni1p has a role in cell polarity control during both yeast and hyphal growth in Candida albicans.</title>
        <authorList>
            <person name="Li C.R."/>
            <person name="Wang Y.M."/>
            <person name="De Zheng X."/>
            <person name="Liang H.Y."/>
            <person name="Tang J.C."/>
            <person name="Wang Y."/>
        </authorList>
    </citation>
    <scope>SUBCELLULAR LOCATION</scope>
</reference>
<reference key="6">
    <citation type="journal article" date="2007" name="Eukaryot. Cell">
        <title>Candida albicans Rho-type GTPase-encoding genes required for polarized cell growth and cell separation.</title>
        <authorList>
            <person name="Dunkler A."/>
            <person name="Wendland J."/>
        </authorList>
    </citation>
    <scope>SUBCELLULAR LOCATION</scope>
    <scope>DISRUPTION PHENOTYPE</scope>
</reference>
<reference key="7">
    <citation type="journal article" date="2007" name="Eukaryot. Cell">
        <title>Role of actin cytoskeletal dynamics in activation of the cyclic AMP pathway and HWP1 gene expression in Candida albicans.</title>
        <authorList>
            <person name="Wolyniak M.J."/>
            <person name="Sundstrom P."/>
        </authorList>
    </citation>
    <scope>FUNCTION</scope>
</reference>
<reference key="8">
    <citation type="journal article" date="2008" name="EMBO J.">
        <title>The IQGAP Iqg1 is a regulatory target of CDK for cytokinesis in Candida albicans.</title>
        <authorList>
            <person name="Li C.R."/>
            <person name="Wang Y.M."/>
            <person name="Wang Y."/>
        </authorList>
    </citation>
    <scope>INTERACTION WITH IQG1</scope>
</reference>
<keyword id="KW-0131">Cell cycle</keyword>
<keyword id="KW-0132">Cell division</keyword>
<keyword id="KW-0175">Coiled coil</keyword>
<keyword id="KW-1185">Reference proteome</keyword>
<accession>Q5AAF4</accession>
<accession>A0A1D8PRL0</accession>
<sequence length="1485" mass="168566">MNEPPPKRQSVFAKGMKKLQRSKSLLNFAEQAKPPTPENFSSLDPKSNLNSIGLSLVGYGLSSDHLPPPRLDTDSESVSSRTSSPTLHVTTKFNPKQRVESFQTATNFKNQIPPEEIVDQLFEKLLSIRVFPDEAVYSLKKQPVERKWELLLREHETNHHFDLKKLSEQATDKFLTNRDRFQEHEFLIMSRSTTQEPKPKLKPLRIVSGGEDYDDEETPTVTKLVHDDSSTSKLSIESGGSSGAPTETESLLGLVNKKLKIRDGSPDWYVSRIMANKLSLKDCKKLERKLVENNVVKNSGVTWTQGFINAQGETALSVVLTKINKKSIKSNEEFDKEYLIVKCLKHINSEKRDETSSLKEKVYVVKALVFLLVSPRLTTRILVTEVLVMLMLLRDKTLWKSALDGLSSLQDRNGDYVIFQPWLNAFEETIIKYSWSQNKAGELSNLKNYATITLILINSMVDMCSSLKRRISIRRDFGNARILNIFEKLAQIEDTRIDNEIEKYEMYAEEDYNEYVEGKKKRNSKQLPNIPQSKLKLLQVSDFVTTPEANTSLEEDELTPELEDNLSGTESSFDEKSFMTKLKEAEDIESDGAMKSVLQRLMKLKQSERSTEDVHKMLVLVDSMLQHVTNESRVIGTDAHSVLNITIQKLMDRLSTEDMARRAVAESKMLSRQLELVKEEKELLEKELETNKIETIRELKKENYYQAELIATQERQLSKLQQKIEQLQSPNNTALPVVDVGQQGFGNGTVASLKDTSSSSPSKRPPTPPGLYSMQKGSLRGGISAPPMLDFKDARPVSDLQDSRPVSDLQDAPRLVESSAPPLPESKDPVAQPPPPESKDSVAPPPPPVPDFIKSAAPPPPPLPGFMNASAPPPPPVPEFIKSSAPPPPPLPGFITTTPPPPPPLPGFITTTPPPPPMPGMLQPGKVKELGTLFKEKHKQEPQKGITKTKADVVPSIRPKNKLKQMHWDKLENIEKTFWNNLEDSVLSNKLIEQGVLGEVEQVFAAKTATIKKKTAVESQQQPTKKSFLSRDLSQQFGINLHMFANLSEEKLVLKVLRCNSEILENHSVLEFFNNEALVELSDSLFRNLAPYSTDPRTRKKPMKNPEELERADRIFLELCYNLRHYWRSRSRALLFSQTYKKDYIDLMRKLNIVDEANAALKKSESLQNVLGIIRTVGNFMNDDAKQALGFKLDTLQRLKFMKDDQNSMTFLHYIEKIVRHSFPEYGSFVDDLNVLSTLHNISIEQLETDCEEMSRSVKNITDSLERGKLSNKKDLHPEDRILTTISSPMLNAKNKNAMLQSHLKRTAGELNSLMTFFGENPKDATARNTFFYKFVTFITEYKKAHVENIQREEEQRTYEIRKKILEDKIAKKEKLKEESAEPEAVVDTAEESSAVIDSLLEKLKSSTPITTNRAKTKNRRSKALSFYSENPLEIVADTKYESVNNLKRRMTTRKRTTDGETSPKSEQFMSRAQAMLHQLRNKEE</sequence>
<dbReference type="EMBL" id="CP017630">
    <property type="protein sequence ID" value="AOW30778.1"/>
    <property type="molecule type" value="Genomic_DNA"/>
</dbReference>
<dbReference type="RefSeq" id="XP_718693.1">
    <property type="nucleotide sequence ID" value="XM_713600.1"/>
</dbReference>
<dbReference type="SMR" id="Q5AAF4"/>
<dbReference type="BioGRID" id="1222766">
    <property type="interactions" value="1"/>
</dbReference>
<dbReference type="IntAct" id="Q5AAF4">
    <property type="interactions" value="1"/>
</dbReference>
<dbReference type="MINT" id="Q5AAF4"/>
<dbReference type="STRING" id="237561.Q5AAF4"/>
<dbReference type="EnsemblFungi" id="CR_00070W_A-T">
    <property type="protein sequence ID" value="CR_00070W_A-T-p1"/>
    <property type="gene ID" value="CR_00070W_A"/>
</dbReference>
<dbReference type="GeneID" id="3639672"/>
<dbReference type="KEGG" id="cal:CAALFM_CR00070WA"/>
<dbReference type="CGD" id="CAL0000190952">
    <property type="gene designation" value="BNR1"/>
</dbReference>
<dbReference type="VEuPathDB" id="FungiDB:CR_00070W_A"/>
<dbReference type="eggNOG" id="KOG1922">
    <property type="taxonomic scope" value="Eukaryota"/>
</dbReference>
<dbReference type="HOGENOM" id="CLU_002339_0_0_1"/>
<dbReference type="InParanoid" id="Q5AAF4"/>
<dbReference type="OMA" id="PWLNAFE"/>
<dbReference type="OrthoDB" id="1104827at2759"/>
<dbReference type="Proteomes" id="UP000000559">
    <property type="component" value="Chromosome R"/>
</dbReference>
<dbReference type="GO" id="GO:0030428">
    <property type="term" value="C:cell septum"/>
    <property type="evidence" value="ECO:0000314"/>
    <property type="project" value="CGD"/>
</dbReference>
<dbReference type="GO" id="GO:0005935">
    <property type="term" value="C:cellular bud neck"/>
    <property type="evidence" value="ECO:0000314"/>
    <property type="project" value="CGD"/>
</dbReference>
<dbReference type="GO" id="GO:0000142">
    <property type="term" value="C:cellular bud neck contractile ring"/>
    <property type="evidence" value="ECO:0000314"/>
    <property type="project" value="CGD"/>
</dbReference>
<dbReference type="GO" id="GO:0032177">
    <property type="term" value="C:cellular bud neck split septin rings"/>
    <property type="evidence" value="ECO:0000314"/>
    <property type="project" value="CGD"/>
</dbReference>
<dbReference type="GO" id="GO:0001411">
    <property type="term" value="C:hyphal tip"/>
    <property type="evidence" value="ECO:0000314"/>
    <property type="project" value="CGD"/>
</dbReference>
<dbReference type="GO" id="GO:0043332">
    <property type="term" value="C:mating projection tip"/>
    <property type="evidence" value="ECO:0000318"/>
    <property type="project" value="GO_Central"/>
</dbReference>
<dbReference type="GO" id="GO:0110085">
    <property type="term" value="C:mitotic actomyosin contractile ring"/>
    <property type="evidence" value="ECO:0000318"/>
    <property type="project" value="GO_Central"/>
</dbReference>
<dbReference type="GO" id="GO:0051015">
    <property type="term" value="F:actin filament binding"/>
    <property type="evidence" value="ECO:0000318"/>
    <property type="project" value="GO_Central"/>
</dbReference>
<dbReference type="GO" id="GO:0008092">
    <property type="term" value="F:cytoskeletal protein binding"/>
    <property type="evidence" value="ECO:0000314"/>
    <property type="project" value="CGD"/>
</dbReference>
<dbReference type="GO" id="GO:0031267">
    <property type="term" value="F:small GTPase binding"/>
    <property type="evidence" value="ECO:0007669"/>
    <property type="project" value="InterPro"/>
</dbReference>
<dbReference type="GO" id="GO:0051017">
    <property type="term" value="P:actin filament bundle assembly"/>
    <property type="evidence" value="ECO:0000318"/>
    <property type="project" value="GO_Central"/>
</dbReference>
<dbReference type="GO" id="GO:1903475">
    <property type="term" value="P:mitotic actomyosin contractile ring assembly"/>
    <property type="evidence" value="ECO:0000318"/>
    <property type="project" value="GO_Central"/>
</dbReference>
<dbReference type="GO" id="GO:0000920">
    <property type="term" value="P:septum digestion after cytokinesis"/>
    <property type="evidence" value="ECO:0000315"/>
    <property type="project" value="CGD"/>
</dbReference>
<dbReference type="FunFam" id="1.20.58.2220:FF:000006">
    <property type="entry name" value="Cytokinesis protein sepA"/>
    <property type="match status" value="1"/>
</dbReference>
<dbReference type="FunFam" id="1.25.10.10:FF:001452">
    <property type="entry name" value="Formin, involved in spindle orientation, putative"/>
    <property type="match status" value="1"/>
</dbReference>
<dbReference type="Gene3D" id="6.10.30.50">
    <property type="match status" value="1"/>
</dbReference>
<dbReference type="Gene3D" id="1.20.58.2220">
    <property type="entry name" value="Formin, FH2 domain"/>
    <property type="match status" value="1"/>
</dbReference>
<dbReference type="Gene3D" id="1.10.238.150">
    <property type="entry name" value="Formin, FH3 diaphanous domain"/>
    <property type="match status" value="1"/>
</dbReference>
<dbReference type="Gene3D" id="1.25.10.10">
    <property type="entry name" value="Leucine-rich Repeat Variant"/>
    <property type="match status" value="1"/>
</dbReference>
<dbReference type="InterPro" id="IPR051661">
    <property type="entry name" value="Actin_filament_regulator"/>
</dbReference>
<dbReference type="InterPro" id="IPR011989">
    <property type="entry name" value="ARM-like"/>
</dbReference>
<dbReference type="InterPro" id="IPR016024">
    <property type="entry name" value="ARM-type_fold"/>
</dbReference>
<dbReference type="InterPro" id="IPR015425">
    <property type="entry name" value="FH2_Formin"/>
</dbReference>
<dbReference type="InterPro" id="IPR042201">
    <property type="entry name" value="FH2_Formin_sf"/>
</dbReference>
<dbReference type="InterPro" id="IPR010472">
    <property type="entry name" value="FH3_dom"/>
</dbReference>
<dbReference type="InterPro" id="IPR014768">
    <property type="entry name" value="GBD/FH3_dom"/>
</dbReference>
<dbReference type="InterPro" id="IPR010473">
    <property type="entry name" value="GTPase-bd"/>
</dbReference>
<dbReference type="PANTHER" id="PTHR47102">
    <property type="entry name" value="PROTEIN BNI1"/>
    <property type="match status" value="1"/>
</dbReference>
<dbReference type="PANTHER" id="PTHR47102:SF2">
    <property type="entry name" value="PROTEIN BNI1"/>
    <property type="match status" value="1"/>
</dbReference>
<dbReference type="Pfam" id="PF06367">
    <property type="entry name" value="Drf_FH3"/>
    <property type="match status" value="1"/>
</dbReference>
<dbReference type="Pfam" id="PF06371">
    <property type="entry name" value="Drf_GBD"/>
    <property type="match status" value="1"/>
</dbReference>
<dbReference type="Pfam" id="PF02181">
    <property type="entry name" value="FH2"/>
    <property type="match status" value="1"/>
</dbReference>
<dbReference type="SMART" id="SM01139">
    <property type="entry name" value="Drf_FH3"/>
    <property type="match status" value="1"/>
</dbReference>
<dbReference type="SMART" id="SM01140">
    <property type="entry name" value="Drf_GBD"/>
    <property type="match status" value="1"/>
</dbReference>
<dbReference type="SMART" id="SM00498">
    <property type="entry name" value="FH2"/>
    <property type="match status" value="1"/>
</dbReference>
<dbReference type="SUPFAM" id="SSF48371">
    <property type="entry name" value="ARM repeat"/>
    <property type="match status" value="1"/>
</dbReference>
<dbReference type="SUPFAM" id="SSF101447">
    <property type="entry name" value="Formin homology 2 domain (FH2 domain)"/>
    <property type="match status" value="1"/>
</dbReference>
<dbReference type="PROSITE" id="PS51444">
    <property type="entry name" value="FH2"/>
    <property type="match status" value="1"/>
</dbReference>
<dbReference type="PROSITE" id="PS51232">
    <property type="entry name" value="GBD_FH3"/>
    <property type="match status" value="1"/>
</dbReference>